<organism>
    <name type="scientific">Shewanella oneidensis (strain ATCC 700550 / JCM 31522 / CIP 106686 / LMG 19005 / NCIMB 14063 / MR-1)</name>
    <dbReference type="NCBI Taxonomy" id="211586"/>
    <lineage>
        <taxon>Bacteria</taxon>
        <taxon>Pseudomonadati</taxon>
        <taxon>Pseudomonadota</taxon>
        <taxon>Gammaproteobacteria</taxon>
        <taxon>Alteromonadales</taxon>
        <taxon>Shewanellaceae</taxon>
        <taxon>Shewanella</taxon>
    </lineage>
</organism>
<proteinExistence type="inferred from homology"/>
<sequence>MSTMLIAVILLTLLALFFGVLLGFAALKFKVEGNPIVDELEAILPQTQCGQCGYPGCRPYAEAIANGDKVNKCPPGGTATMEKLASLMGVEPEPLNAEAQSQVKKVAYIREDECIGCTKCIQACPVDAIIGAGKLMHTVLTADCTGCDLCVEPCPVDCIDMVPVTQNLKNWNWRLNAIPVTLIQETPHEEKRG</sequence>
<comment type="function">
    <text evidence="1">Part of a membrane-bound complex that couples electron transfer with translocation of ions across the membrane.</text>
</comment>
<comment type="cofactor">
    <cofactor evidence="1">
        <name>[4Fe-4S] cluster</name>
        <dbReference type="ChEBI" id="CHEBI:49883"/>
    </cofactor>
    <text evidence="1">Binds 3 [4Fe-4S] clusters.</text>
</comment>
<comment type="subunit">
    <text evidence="1">The complex is composed of six subunits: RnfA, RnfB, RnfC, RnfD, RnfE and RnfG.</text>
</comment>
<comment type="subcellular location">
    <subcellularLocation>
        <location evidence="1">Cell inner membrane</location>
    </subcellularLocation>
</comment>
<comment type="similarity">
    <text evidence="1">Belongs to the 4Fe4S bacterial-type ferredoxin family. RnfB subfamily.</text>
</comment>
<dbReference type="EC" id="7.-.-.-" evidence="1"/>
<dbReference type="EMBL" id="AE014299">
    <property type="protein sequence ID" value="AAN55540.1"/>
    <property type="molecule type" value="Genomic_DNA"/>
</dbReference>
<dbReference type="RefSeq" id="NP_718096.1">
    <property type="nucleotide sequence ID" value="NC_004347.2"/>
</dbReference>
<dbReference type="RefSeq" id="WP_011072472.1">
    <property type="nucleotide sequence ID" value="NC_004347.2"/>
</dbReference>
<dbReference type="STRING" id="211586.SO_2509"/>
<dbReference type="PaxDb" id="211586-SO_2509"/>
<dbReference type="KEGG" id="son:SO_2509"/>
<dbReference type="PATRIC" id="fig|211586.12.peg.2415"/>
<dbReference type="eggNOG" id="COG2878">
    <property type="taxonomic scope" value="Bacteria"/>
</dbReference>
<dbReference type="HOGENOM" id="CLU_063448_2_0_6"/>
<dbReference type="OrthoDB" id="9789936at2"/>
<dbReference type="PhylomeDB" id="Q8EE80"/>
<dbReference type="BioCyc" id="SONE211586:G1GMP-2300-MONOMER"/>
<dbReference type="Proteomes" id="UP000008186">
    <property type="component" value="Chromosome"/>
</dbReference>
<dbReference type="GO" id="GO:0005886">
    <property type="term" value="C:plasma membrane"/>
    <property type="evidence" value="ECO:0007669"/>
    <property type="project" value="UniProtKB-SubCell"/>
</dbReference>
<dbReference type="GO" id="GO:0051539">
    <property type="term" value="F:4 iron, 4 sulfur cluster binding"/>
    <property type="evidence" value="ECO:0007669"/>
    <property type="project" value="UniProtKB-UniRule"/>
</dbReference>
<dbReference type="GO" id="GO:0009055">
    <property type="term" value="F:electron transfer activity"/>
    <property type="evidence" value="ECO:0007669"/>
    <property type="project" value="InterPro"/>
</dbReference>
<dbReference type="GO" id="GO:0046872">
    <property type="term" value="F:metal ion binding"/>
    <property type="evidence" value="ECO:0007669"/>
    <property type="project" value="UniProtKB-KW"/>
</dbReference>
<dbReference type="GO" id="GO:0022900">
    <property type="term" value="P:electron transport chain"/>
    <property type="evidence" value="ECO:0007669"/>
    <property type="project" value="UniProtKB-UniRule"/>
</dbReference>
<dbReference type="FunFam" id="1.10.15.40:FF:000001">
    <property type="entry name" value="Ion-translocating oxidoreductase complex subunit B"/>
    <property type="match status" value="1"/>
</dbReference>
<dbReference type="Gene3D" id="3.30.70.20">
    <property type="match status" value="2"/>
</dbReference>
<dbReference type="Gene3D" id="1.10.15.40">
    <property type="entry name" value="Electron transport complex subunit B, putative Fe-S cluster"/>
    <property type="match status" value="1"/>
</dbReference>
<dbReference type="HAMAP" id="MF_00463">
    <property type="entry name" value="RsxB_RnfB"/>
    <property type="match status" value="1"/>
</dbReference>
<dbReference type="InterPro" id="IPR007202">
    <property type="entry name" value="4Fe-4S_dom"/>
</dbReference>
<dbReference type="InterPro" id="IPR017896">
    <property type="entry name" value="4Fe4S_Fe-S-bd"/>
</dbReference>
<dbReference type="InterPro" id="IPR017900">
    <property type="entry name" value="4Fe4S_Fe_S_CS"/>
</dbReference>
<dbReference type="InterPro" id="IPR010207">
    <property type="entry name" value="Elect_transpt_cplx_RnfB/RsxB"/>
</dbReference>
<dbReference type="InterPro" id="IPR016463">
    <property type="entry name" value="RnfB/RsxB_Proteobac"/>
</dbReference>
<dbReference type="InterPro" id="IPR050294">
    <property type="entry name" value="RnfB_subfamily"/>
</dbReference>
<dbReference type="NCBIfam" id="NF003475">
    <property type="entry name" value="PRK05113.1"/>
    <property type="match status" value="1"/>
</dbReference>
<dbReference type="NCBIfam" id="TIGR01944">
    <property type="entry name" value="rnfB"/>
    <property type="match status" value="1"/>
</dbReference>
<dbReference type="PANTHER" id="PTHR42859:SF3">
    <property type="entry name" value="ION-TRANSLOCATING OXIDOREDUCTASE COMPLEX SUBUNIT B"/>
    <property type="match status" value="1"/>
</dbReference>
<dbReference type="PANTHER" id="PTHR42859">
    <property type="entry name" value="OXIDOREDUCTASE"/>
    <property type="match status" value="1"/>
</dbReference>
<dbReference type="Pfam" id="PF14697">
    <property type="entry name" value="Fer4_21"/>
    <property type="match status" value="1"/>
</dbReference>
<dbReference type="Pfam" id="PF04060">
    <property type="entry name" value="FeS"/>
    <property type="match status" value="1"/>
</dbReference>
<dbReference type="PIRSF" id="PIRSF005784">
    <property type="entry name" value="Elect_transpt_RnfB"/>
    <property type="match status" value="1"/>
</dbReference>
<dbReference type="SUPFAM" id="SSF54862">
    <property type="entry name" value="4Fe-4S ferredoxins"/>
    <property type="match status" value="1"/>
</dbReference>
<dbReference type="PROSITE" id="PS51656">
    <property type="entry name" value="4FE4S"/>
    <property type="match status" value="1"/>
</dbReference>
<dbReference type="PROSITE" id="PS00198">
    <property type="entry name" value="4FE4S_FER_1"/>
    <property type="match status" value="2"/>
</dbReference>
<dbReference type="PROSITE" id="PS51379">
    <property type="entry name" value="4FE4S_FER_2"/>
    <property type="match status" value="2"/>
</dbReference>
<gene>
    <name evidence="1" type="primary">rnfB</name>
    <name type="ordered locus">SO_2509</name>
</gene>
<evidence type="ECO:0000255" key="1">
    <source>
        <dbReference type="HAMAP-Rule" id="MF_00463"/>
    </source>
</evidence>
<accession>Q8EE80</accession>
<feature type="chain" id="PRO_1000013654" description="Ion-translocating oxidoreductase complex subunit B">
    <location>
        <begin position="1"/>
        <end position="193"/>
    </location>
</feature>
<feature type="domain" description="4Fe-4S" evidence="1">
    <location>
        <begin position="32"/>
        <end position="90"/>
    </location>
</feature>
<feature type="domain" description="4Fe-4S ferredoxin-type 1" evidence="1">
    <location>
        <begin position="105"/>
        <end position="134"/>
    </location>
</feature>
<feature type="domain" description="4Fe-4S ferredoxin-type 2" evidence="1">
    <location>
        <begin position="136"/>
        <end position="164"/>
    </location>
</feature>
<feature type="region of interest" description="Hydrophobic" evidence="1">
    <location>
        <begin position="1"/>
        <end position="26"/>
    </location>
</feature>
<feature type="binding site" evidence="1">
    <location>
        <position position="49"/>
    </location>
    <ligand>
        <name>[4Fe-4S] cluster</name>
        <dbReference type="ChEBI" id="CHEBI:49883"/>
        <label>1</label>
    </ligand>
</feature>
<feature type="binding site" evidence="1">
    <location>
        <position position="52"/>
    </location>
    <ligand>
        <name>[4Fe-4S] cluster</name>
        <dbReference type="ChEBI" id="CHEBI:49883"/>
        <label>1</label>
    </ligand>
</feature>
<feature type="binding site" evidence="1">
    <location>
        <position position="57"/>
    </location>
    <ligand>
        <name>[4Fe-4S] cluster</name>
        <dbReference type="ChEBI" id="CHEBI:49883"/>
        <label>1</label>
    </ligand>
</feature>
<feature type="binding site" evidence="1">
    <location>
        <position position="73"/>
    </location>
    <ligand>
        <name>[4Fe-4S] cluster</name>
        <dbReference type="ChEBI" id="CHEBI:49883"/>
        <label>1</label>
    </ligand>
</feature>
<feature type="binding site" evidence="1">
    <location>
        <position position="114"/>
    </location>
    <ligand>
        <name>[4Fe-4S] cluster</name>
        <dbReference type="ChEBI" id="CHEBI:49883"/>
        <label>2</label>
    </ligand>
</feature>
<feature type="binding site" evidence="1">
    <location>
        <position position="117"/>
    </location>
    <ligand>
        <name>[4Fe-4S] cluster</name>
        <dbReference type="ChEBI" id="CHEBI:49883"/>
        <label>2</label>
    </ligand>
</feature>
<feature type="binding site" evidence="1">
    <location>
        <position position="120"/>
    </location>
    <ligand>
        <name>[4Fe-4S] cluster</name>
        <dbReference type="ChEBI" id="CHEBI:49883"/>
        <label>2</label>
    </ligand>
</feature>
<feature type="binding site" evidence="1">
    <location>
        <position position="124"/>
    </location>
    <ligand>
        <name>[4Fe-4S] cluster</name>
        <dbReference type="ChEBI" id="CHEBI:49883"/>
        <label>3</label>
    </ligand>
</feature>
<feature type="binding site" evidence="1">
    <location>
        <position position="144"/>
    </location>
    <ligand>
        <name>[4Fe-4S] cluster</name>
        <dbReference type="ChEBI" id="CHEBI:49883"/>
        <label>3</label>
    </ligand>
</feature>
<feature type="binding site" evidence="1">
    <location>
        <position position="147"/>
    </location>
    <ligand>
        <name>[4Fe-4S] cluster</name>
        <dbReference type="ChEBI" id="CHEBI:49883"/>
        <label>3</label>
    </ligand>
</feature>
<feature type="binding site" evidence="1">
    <location>
        <position position="150"/>
    </location>
    <ligand>
        <name>[4Fe-4S] cluster</name>
        <dbReference type="ChEBI" id="CHEBI:49883"/>
        <label>3</label>
    </ligand>
</feature>
<feature type="binding site" evidence="1">
    <location>
        <position position="154"/>
    </location>
    <ligand>
        <name>[4Fe-4S] cluster</name>
        <dbReference type="ChEBI" id="CHEBI:49883"/>
        <label>2</label>
    </ligand>
</feature>
<reference key="1">
    <citation type="journal article" date="2002" name="Nat. Biotechnol.">
        <title>Genome sequence of the dissimilatory metal ion-reducing bacterium Shewanella oneidensis.</title>
        <authorList>
            <person name="Heidelberg J.F."/>
            <person name="Paulsen I.T."/>
            <person name="Nelson K.E."/>
            <person name="Gaidos E.J."/>
            <person name="Nelson W.C."/>
            <person name="Read T.D."/>
            <person name="Eisen J.A."/>
            <person name="Seshadri R."/>
            <person name="Ward N.L."/>
            <person name="Methe B.A."/>
            <person name="Clayton R.A."/>
            <person name="Meyer T."/>
            <person name="Tsapin A."/>
            <person name="Scott J."/>
            <person name="Beanan M.J."/>
            <person name="Brinkac L.M."/>
            <person name="Daugherty S.C."/>
            <person name="DeBoy R.T."/>
            <person name="Dodson R.J."/>
            <person name="Durkin A.S."/>
            <person name="Haft D.H."/>
            <person name="Kolonay J.F."/>
            <person name="Madupu R."/>
            <person name="Peterson J.D."/>
            <person name="Umayam L.A."/>
            <person name="White O."/>
            <person name="Wolf A.M."/>
            <person name="Vamathevan J.J."/>
            <person name="Weidman J.F."/>
            <person name="Impraim M."/>
            <person name="Lee K."/>
            <person name="Berry K.J."/>
            <person name="Lee C."/>
            <person name="Mueller J."/>
            <person name="Khouri H.M."/>
            <person name="Gill J."/>
            <person name="Utterback T.R."/>
            <person name="McDonald L.A."/>
            <person name="Feldblyum T.V."/>
            <person name="Smith H.O."/>
            <person name="Venter J.C."/>
            <person name="Nealson K.H."/>
            <person name="Fraser C.M."/>
        </authorList>
    </citation>
    <scope>NUCLEOTIDE SEQUENCE [LARGE SCALE GENOMIC DNA]</scope>
    <source>
        <strain>ATCC 700550 / JCM 31522 / CIP 106686 / LMG 19005 / NCIMB 14063 / MR-1</strain>
    </source>
</reference>
<keyword id="KW-0004">4Fe-4S</keyword>
<keyword id="KW-0997">Cell inner membrane</keyword>
<keyword id="KW-1003">Cell membrane</keyword>
<keyword id="KW-0249">Electron transport</keyword>
<keyword id="KW-0408">Iron</keyword>
<keyword id="KW-0411">Iron-sulfur</keyword>
<keyword id="KW-0472">Membrane</keyword>
<keyword id="KW-0479">Metal-binding</keyword>
<keyword id="KW-1185">Reference proteome</keyword>
<keyword id="KW-0677">Repeat</keyword>
<keyword id="KW-1278">Translocase</keyword>
<keyword id="KW-0813">Transport</keyword>
<name>RNFB_SHEON</name>
<protein>
    <recommendedName>
        <fullName evidence="1">Ion-translocating oxidoreductase complex subunit B</fullName>
        <ecNumber evidence="1">7.-.-.-</ecNumber>
    </recommendedName>
    <alternativeName>
        <fullName evidence="1">Rnf electron transport complex subunit B</fullName>
    </alternativeName>
</protein>